<comment type="function">
    <text evidence="1">One of the primary rRNA binding proteins, it binds directly to 16S rRNA where it nucleates assembly of the body of the 30S subunit.</text>
</comment>
<comment type="function">
    <text evidence="1">With S5 and S12 plays an important role in translational accuracy.</text>
</comment>
<comment type="subunit">
    <text evidence="1">Part of the 30S ribosomal subunit. Contacts protein S5. The interaction surface between S4 and S5 is involved in control of translational fidelity.</text>
</comment>
<comment type="similarity">
    <text evidence="1">Belongs to the universal ribosomal protein uS4 family.</text>
</comment>
<reference key="1">
    <citation type="submission" date="2007-07" db="EMBL/GenBank/DDBJ databases">
        <title>Complete sequence of Fervidobacterium nodosum Rt17-B1.</title>
        <authorList>
            <consortium name="US DOE Joint Genome Institute"/>
            <person name="Copeland A."/>
            <person name="Lucas S."/>
            <person name="Lapidus A."/>
            <person name="Barry K."/>
            <person name="Glavina del Rio T."/>
            <person name="Dalin E."/>
            <person name="Tice H."/>
            <person name="Pitluck S."/>
            <person name="Saunders E."/>
            <person name="Brettin T."/>
            <person name="Bruce D."/>
            <person name="Detter J.C."/>
            <person name="Han C."/>
            <person name="Schmutz J."/>
            <person name="Larimer F."/>
            <person name="Land M."/>
            <person name="Hauser L."/>
            <person name="Kyrpides N."/>
            <person name="Mikhailova N."/>
            <person name="Nelson K."/>
            <person name="Gogarten J.P."/>
            <person name="Noll K."/>
            <person name="Richardson P."/>
        </authorList>
    </citation>
    <scope>NUCLEOTIDE SEQUENCE [LARGE SCALE GENOMIC DNA]</scope>
    <source>
        <strain>ATCC 35602 / DSM 5306 / Rt17-B1</strain>
    </source>
</reference>
<organism>
    <name type="scientific">Fervidobacterium nodosum (strain ATCC 35602 / DSM 5306 / Rt17-B1)</name>
    <dbReference type="NCBI Taxonomy" id="381764"/>
    <lineage>
        <taxon>Bacteria</taxon>
        <taxon>Thermotogati</taxon>
        <taxon>Thermotogota</taxon>
        <taxon>Thermotogae</taxon>
        <taxon>Thermotogales</taxon>
        <taxon>Fervidobacteriaceae</taxon>
        <taxon>Fervidobacterium</taxon>
    </lineage>
</organism>
<name>RS4_FERNB</name>
<evidence type="ECO:0000255" key="1">
    <source>
        <dbReference type="HAMAP-Rule" id="MF_01306"/>
    </source>
</evidence>
<evidence type="ECO:0000305" key="2"/>
<accession>A7HM25</accession>
<proteinExistence type="inferred from homology"/>
<protein>
    <recommendedName>
        <fullName evidence="1">Small ribosomal subunit protein uS4</fullName>
    </recommendedName>
    <alternativeName>
        <fullName evidence="2">30S ribosomal protein S4</fullName>
    </alternativeName>
</protein>
<feature type="chain" id="PRO_0000322299" description="Small ribosomal subunit protein uS4">
    <location>
        <begin position="1"/>
        <end position="209"/>
    </location>
</feature>
<feature type="domain" description="S4 RNA-binding" evidence="1">
    <location>
        <begin position="98"/>
        <end position="166"/>
    </location>
</feature>
<gene>
    <name evidence="1" type="primary">rpsD</name>
    <name type="ordered locus">Fnod_1111</name>
</gene>
<sequence>MARNTGPLCKLCRREGMKLYLKGERCFSEKCPFDKRPFAPGQHGREKKKLTQYALQLRAKQTMKRIYGVLEKQFRIYYERAVKQSGDTRENLVAQVERRLDNVVYRLGFAINRRAARQLVSHGHVLVNGKKVDIPSYQVRPGDVISIKEGSRTIEPIKQAIELNKGRAISNWLEVDYDQFKGVYVRNPKLEEIIDLPVNVQAIVEFYSR</sequence>
<dbReference type="EMBL" id="CP000771">
    <property type="protein sequence ID" value="ABS60958.1"/>
    <property type="molecule type" value="Genomic_DNA"/>
</dbReference>
<dbReference type="RefSeq" id="WP_011994271.1">
    <property type="nucleotide sequence ID" value="NC_009718.1"/>
</dbReference>
<dbReference type="SMR" id="A7HM25"/>
<dbReference type="STRING" id="381764.Fnod_1111"/>
<dbReference type="KEGG" id="fno:Fnod_1111"/>
<dbReference type="eggNOG" id="COG0522">
    <property type="taxonomic scope" value="Bacteria"/>
</dbReference>
<dbReference type="HOGENOM" id="CLU_092403_0_2_0"/>
<dbReference type="OrthoDB" id="9803672at2"/>
<dbReference type="Proteomes" id="UP000002415">
    <property type="component" value="Chromosome"/>
</dbReference>
<dbReference type="GO" id="GO:0015935">
    <property type="term" value="C:small ribosomal subunit"/>
    <property type="evidence" value="ECO:0007669"/>
    <property type="project" value="InterPro"/>
</dbReference>
<dbReference type="GO" id="GO:0019843">
    <property type="term" value="F:rRNA binding"/>
    <property type="evidence" value="ECO:0007669"/>
    <property type="project" value="UniProtKB-UniRule"/>
</dbReference>
<dbReference type="GO" id="GO:0003735">
    <property type="term" value="F:structural constituent of ribosome"/>
    <property type="evidence" value="ECO:0007669"/>
    <property type="project" value="InterPro"/>
</dbReference>
<dbReference type="GO" id="GO:0042274">
    <property type="term" value="P:ribosomal small subunit biogenesis"/>
    <property type="evidence" value="ECO:0007669"/>
    <property type="project" value="TreeGrafter"/>
</dbReference>
<dbReference type="GO" id="GO:0006412">
    <property type="term" value="P:translation"/>
    <property type="evidence" value="ECO:0007669"/>
    <property type="project" value="UniProtKB-UniRule"/>
</dbReference>
<dbReference type="CDD" id="cd00165">
    <property type="entry name" value="S4"/>
    <property type="match status" value="1"/>
</dbReference>
<dbReference type="FunFam" id="3.10.290.10:FF:000001">
    <property type="entry name" value="30S ribosomal protein S4"/>
    <property type="match status" value="1"/>
</dbReference>
<dbReference type="Gene3D" id="1.10.1050.10">
    <property type="entry name" value="Ribosomal Protein S4 Delta 41, Chain A, domain 1"/>
    <property type="match status" value="1"/>
</dbReference>
<dbReference type="Gene3D" id="3.10.290.10">
    <property type="entry name" value="RNA-binding S4 domain"/>
    <property type="match status" value="1"/>
</dbReference>
<dbReference type="HAMAP" id="MF_01306_B">
    <property type="entry name" value="Ribosomal_uS4_B"/>
    <property type="match status" value="1"/>
</dbReference>
<dbReference type="InterPro" id="IPR022801">
    <property type="entry name" value="Ribosomal_uS4"/>
</dbReference>
<dbReference type="InterPro" id="IPR005709">
    <property type="entry name" value="Ribosomal_uS4_bac-type"/>
</dbReference>
<dbReference type="InterPro" id="IPR001912">
    <property type="entry name" value="Ribosomal_uS4_N"/>
</dbReference>
<dbReference type="InterPro" id="IPR002942">
    <property type="entry name" value="S4_RNA-bd"/>
</dbReference>
<dbReference type="InterPro" id="IPR036986">
    <property type="entry name" value="S4_RNA-bd_sf"/>
</dbReference>
<dbReference type="NCBIfam" id="NF003717">
    <property type="entry name" value="PRK05327.1"/>
    <property type="match status" value="1"/>
</dbReference>
<dbReference type="NCBIfam" id="TIGR01017">
    <property type="entry name" value="rpsD_bact"/>
    <property type="match status" value="1"/>
</dbReference>
<dbReference type="PANTHER" id="PTHR11831">
    <property type="entry name" value="30S 40S RIBOSOMAL PROTEIN"/>
    <property type="match status" value="1"/>
</dbReference>
<dbReference type="PANTHER" id="PTHR11831:SF4">
    <property type="entry name" value="SMALL RIBOSOMAL SUBUNIT PROTEIN US4M"/>
    <property type="match status" value="1"/>
</dbReference>
<dbReference type="Pfam" id="PF00163">
    <property type="entry name" value="Ribosomal_S4"/>
    <property type="match status" value="1"/>
</dbReference>
<dbReference type="Pfam" id="PF01479">
    <property type="entry name" value="S4"/>
    <property type="match status" value="1"/>
</dbReference>
<dbReference type="SMART" id="SM01390">
    <property type="entry name" value="Ribosomal_S4"/>
    <property type="match status" value="1"/>
</dbReference>
<dbReference type="SMART" id="SM00363">
    <property type="entry name" value="S4"/>
    <property type="match status" value="1"/>
</dbReference>
<dbReference type="SUPFAM" id="SSF55174">
    <property type="entry name" value="Alpha-L RNA-binding motif"/>
    <property type="match status" value="1"/>
</dbReference>
<dbReference type="PROSITE" id="PS50889">
    <property type="entry name" value="S4"/>
    <property type="match status" value="1"/>
</dbReference>
<keyword id="KW-1185">Reference proteome</keyword>
<keyword id="KW-0687">Ribonucleoprotein</keyword>
<keyword id="KW-0689">Ribosomal protein</keyword>
<keyword id="KW-0694">RNA-binding</keyword>
<keyword id="KW-0699">rRNA-binding</keyword>